<name>NGL2_YEAST</name>
<protein>
    <recommendedName>
        <fullName>RNA exonuclease NGL2</fullName>
        <ecNumber>3.1.-.-</ecNumber>
    </recommendedName>
    <alternativeName>
        <fullName>Carbon catabolite repressor protein 4 homolog</fullName>
    </alternativeName>
</protein>
<gene>
    <name type="primary">NGL2</name>
    <name type="ordered locus">YMR285C</name>
    <name type="ORF">YM8021.11C</name>
</gene>
<comment type="function">
    <text evidence="2">Involved in pre-rRNA processing. Required for the final stage of 3'-end maturation of 5.8S rRNA at site E.</text>
</comment>
<comment type="subcellular location">
    <subcellularLocation>
        <location evidence="4">Cytoplasm</location>
    </subcellularLocation>
    <subcellularLocation>
        <location evidence="4">Nucleus</location>
    </subcellularLocation>
</comment>
<comment type="miscellaneous">
    <text evidence="3">Present with 3570 molecules/cell in log phase SD medium.</text>
</comment>
<comment type="similarity">
    <text evidence="4">Belongs to the CCR4/nocturin family.</text>
</comment>
<accession>Q03264</accession>
<accession>D6W0B2</accession>
<dbReference type="EC" id="3.1.-.-"/>
<dbReference type="EMBL" id="Z49704">
    <property type="protein sequence ID" value="CAA89783.1"/>
    <property type="molecule type" value="Genomic_DNA"/>
</dbReference>
<dbReference type="EMBL" id="BK006946">
    <property type="protein sequence ID" value="DAA10186.1"/>
    <property type="molecule type" value="Genomic_DNA"/>
</dbReference>
<dbReference type="PIR" id="S54592">
    <property type="entry name" value="S54592"/>
</dbReference>
<dbReference type="RefSeq" id="NP_014012.1">
    <property type="nucleotide sequence ID" value="NM_001182792.1"/>
</dbReference>
<dbReference type="SMR" id="Q03264"/>
<dbReference type="BioGRID" id="35465">
    <property type="interactions" value="165"/>
</dbReference>
<dbReference type="DIP" id="DIP-894N"/>
<dbReference type="FunCoup" id="Q03264">
    <property type="interactions" value="567"/>
</dbReference>
<dbReference type="IntAct" id="Q03264">
    <property type="interactions" value="2"/>
</dbReference>
<dbReference type="STRING" id="4932.YMR285C"/>
<dbReference type="iPTMnet" id="Q03264"/>
<dbReference type="PaxDb" id="4932-YMR285C"/>
<dbReference type="PeptideAtlas" id="Q03264"/>
<dbReference type="EnsemblFungi" id="YMR285C_mRNA">
    <property type="protein sequence ID" value="YMR285C"/>
    <property type="gene ID" value="YMR285C"/>
</dbReference>
<dbReference type="GeneID" id="855329"/>
<dbReference type="KEGG" id="sce:YMR285C"/>
<dbReference type="AGR" id="SGD:S000004898"/>
<dbReference type="SGD" id="S000004898">
    <property type="gene designation" value="NGL2"/>
</dbReference>
<dbReference type="VEuPathDB" id="FungiDB:YMR285C"/>
<dbReference type="eggNOG" id="KOG2338">
    <property type="taxonomic scope" value="Eukaryota"/>
</dbReference>
<dbReference type="GeneTree" id="ENSGT00940000176796"/>
<dbReference type="HOGENOM" id="CLU_034867_0_0_1"/>
<dbReference type="InParanoid" id="Q03264"/>
<dbReference type="OMA" id="PEISNWA"/>
<dbReference type="OrthoDB" id="428734at2759"/>
<dbReference type="BioCyc" id="YEAST:G3O-32955-MONOMER"/>
<dbReference type="BioGRID-ORCS" id="855329">
    <property type="hits" value="0 hits in 10 CRISPR screens"/>
</dbReference>
<dbReference type="PRO" id="PR:Q03264"/>
<dbReference type="Proteomes" id="UP000002311">
    <property type="component" value="Chromosome XIII"/>
</dbReference>
<dbReference type="RNAct" id="Q03264">
    <property type="molecule type" value="protein"/>
</dbReference>
<dbReference type="GO" id="GO:0005737">
    <property type="term" value="C:cytoplasm"/>
    <property type="evidence" value="ECO:0000305"/>
    <property type="project" value="SGD"/>
</dbReference>
<dbReference type="GO" id="GO:0005634">
    <property type="term" value="C:nucleus"/>
    <property type="evidence" value="ECO:0007669"/>
    <property type="project" value="UniProtKB-SubCell"/>
</dbReference>
<dbReference type="GO" id="GO:0004535">
    <property type="term" value="F:poly(A)-specific ribonuclease activity"/>
    <property type="evidence" value="ECO:0000318"/>
    <property type="project" value="GO_Central"/>
</dbReference>
<dbReference type="GO" id="GO:0003723">
    <property type="term" value="F:RNA binding"/>
    <property type="evidence" value="ECO:0007669"/>
    <property type="project" value="UniProtKB-KW"/>
</dbReference>
<dbReference type="GO" id="GO:0004521">
    <property type="term" value="F:RNA endonuclease activity"/>
    <property type="evidence" value="ECO:0000315"/>
    <property type="project" value="SGD"/>
</dbReference>
<dbReference type="GO" id="GO:0006364">
    <property type="term" value="P:rRNA processing"/>
    <property type="evidence" value="ECO:0000315"/>
    <property type="project" value="SGD"/>
</dbReference>
<dbReference type="Gene3D" id="3.60.10.10">
    <property type="entry name" value="Endonuclease/exonuclease/phosphatase"/>
    <property type="match status" value="1"/>
</dbReference>
<dbReference type="InterPro" id="IPR050410">
    <property type="entry name" value="CCR4/nocturin_mRNA_transcr"/>
</dbReference>
<dbReference type="InterPro" id="IPR036691">
    <property type="entry name" value="Endo/exonu/phosph_ase_sf"/>
</dbReference>
<dbReference type="InterPro" id="IPR005135">
    <property type="entry name" value="Endo/exonuclease/phosphatase"/>
</dbReference>
<dbReference type="PANTHER" id="PTHR12121">
    <property type="entry name" value="CARBON CATABOLITE REPRESSOR PROTEIN 4"/>
    <property type="match status" value="1"/>
</dbReference>
<dbReference type="PANTHER" id="PTHR12121:SF45">
    <property type="entry name" value="NOCTURNIN"/>
    <property type="match status" value="1"/>
</dbReference>
<dbReference type="Pfam" id="PF03372">
    <property type="entry name" value="Exo_endo_phos"/>
    <property type="match status" value="1"/>
</dbReference>
<dbReference type="SUPFAM" id="SSF56219">
    <property type="entry name" value="DNase I-like"/>
    <property type="match status" value="1"/>
</dbReference>
<sequence>MTQDKEVKVVAPDVAPDQEVEINKSVKDAKHQTNDDSLLQHKKKGKKGKKSKPIVTPEHIAKVRAEREVMRKAKRDAMLAQGVDPDCPPELHFIRRPFLSLHEAEPVTGFRFKLMTYNCLAQALIRRKLFPDSGDALKWYRRSKVLLNEFKYYNSDVICLQEIDHIQFQSFWKDEFSKLGYDGQYYRNATKNHGVAIMWRRELFHQVDKMLIDYDKESSESISTRTTTNNVGLVLALKFSEKVLSNLGKKSSKKCGILIGTTHLFWHPFGTYERTRQCYIVLKKMKEFMHRVNVLQNENDGDLSHWFPFFCGDFNSQPFDTPYLSMTSKPVHYRNRAKTVIGCSTSYKFSKVRDGEEGADDEEGGNIEKYGKDQPESPVPEKFHANEEQSELVDKMAQLHNSLDMRAISLYSVGYKNVHPENAGLDNDRGEPEISNWANTWRGLLDYLFYVKKWDPQSNCQEVETLGDFEKENKVKCRGFLRMPPGNEMTKHGQPHVGEYASDHLSMVCDLELQL</sequence>
<feature type="chain" id="PRO_0000218579" description="RNA exonuclease NGL2">
    <location>
        <begin position="1"/>
        <end position="515"/>
    </location>
</feature>
<feature type="region of interest" description="Disordered" evidence="1">
    <location>
        <begin position="1"/>
        <end position="54"/>
    </location>
</feature>
<feature type="region of interest" description="Disordered" evidence="1">
    <location>
        <begin position="353"/>
        <end position="381"/>
    </location>
</feature>
<feature type="compositionally biased region" description="Basic and acidic residues" evidence="1">
    <location>
        <begin position="21"/>
        <end position="34"/>
    </location>
</feature>
<feature type="compositionally biased region" description="Basic residues" evidence="1">
    <location>
        <begin position="40"/>
        <end position="52"/>
    </location>
</feature>
<feature type="compositionally biased region" description="Basic and acidic residues" evidence="1">
    <location>
        <begin position="369"/>
        <end position="381"/>
    </location>
</feature>
<keyword id="KW-0963">Cytoplasm</keyword>
<keyword id="KW-0269">Exonuclease</keyword>
<keyword id="KW-0378">Hydrolase</keyword>
<keyword id="KW-0540">Nuclease</keyword>
<keyword id="KW-0539">Nucleus</keyword>
<keyword id="KW-1185">Reference proteome</keyword>
<keyword id="KW-0694">RNA-binding</keyword>
<reference key="1">
    <citation type="journal article" date="1997" name="Nature">
        <title>The nucleotide sequence of Saccharomyces cerevisiae chromosome XIII.</title>
        <authorList>
            <person name="Bowman S."/>
            <person name="Churcher C.M."/>
            <person name="Badcock K."/>
            <person name="Brown D."/>
            <person name="Chillingworth T."/>
            <person name="Connor R."/>
            <person name="Dedman K."/>
            <person name="Devlin K."/>
            <person name="Gentles S."/>
            <person name="Hamlin N."/>
            <person name="Hunt S."/>
            <person name="Jagels K."/>
            <person name="Lye G."/>
            <person name="Moule S."/>
            <person name="Odell C."/>
            <person name="Pearson D."/>
            <person name="Rajandream M.A."/>
            <person name="Rice P."/>
            <person name="Skelton J."/>
            <person name="Walsh S.V."/>
            <person name="Whitehead S."/>
            <person name="Barrell B.G."/>
        </authorList>
    </citation>
    <scope>NUCLEOTIDE SEQUENCE [LARGE SCALE GENOMIC DNA]</scope>
    <source>
        <strain>ATCC 204508 / S288c</strain>
    </source>
</reference>
<reference key="2">
    <citation type="journal article" date="2014" name="G3 (Bethesda)">
        <title>The reference genome sequence of Saccharomyces cerevisiae: Then and now.</title>
        <authorList>
            <person name="Engel S.R."/>
            <person name="Dietrich F.S."/>
            <person name="Fisk D.G."/>
            <person name="Binkley G."/>
            <person name="Balakrishnan R."/>
            <person name="Costanzo M.C."/>
            <person name="Dwight S.S."/>
            <person name="Hitz B.C."/>
            <person name="Karra K."/>
            <person name="Nash R.S."/>
            <person name="Weng S."/>
            <person name="Wong E.D."/>
            <person name="Lloyd P."/>
            <person name="Skrzypek M.S."/>
            <person name="Miyasato S.R."/>
            <person name="Simison M."/>
            <person name="Cherry J.M."/>
        </authorList>
    </citation>
    <scope>GENOME REANNOTATION</scope>
    <source>
        <strain>ATCC 204508 / S288c</strain>
    </source>
</reference>
<reference key="3">
    <citation type="journal article" date="2002" name="RNA">
        <title>Ngl2p is a Ccr4p-like RNA nuclease essential for the final step in 3'-end processing of 5.8S rRNA in Saccharomyces cerevisiae.</title>
        <authorList>
            <person name="Faber A.W."/>
            <person name="van Dijk M."/>
            <person name="Raue H.A."/>
            <person name="Vos J.C."/>
        </authorList>
    </citation>
    <scope>FUNCTION</scope>
</reference>
<reference key="4">
    <citation type="journal article" date="2003" name="Nature">
        <title>Global analysis of protein expression in yeast.</title>
        <authorList>
            <person name="Ghaemmaghami S."/>
            <person name="Huh W.-K."/>
            <person name="Bower K."/>
            <person name="Howson R.W."/>
            <person name="Belle A."/>
            <person name="Dephoure N."/>
            <person name="O'Shea E.K."/>
            <person name="Weissman J.S."/>
        </authorList>
    </citation>
    <scope>LEVEL OF PROTEIN EXPRESSION [LARGE SCALE ANALYSIS]</scope>
</reference>
<proteinExistence type="evidence at protein level"/>
<evidence type="ECO:0000256" key="1">
    <source>
        <dbReference type="SAM" id="MobiDB-lite"/>
    </source>
</evidence>
<evidence type="ECO:0000269" key="2">
    <source>
    </source>
</evidence>
<evidence type="ECO:0000269" key="3">
    <source>
    </source>
</evidence>
<evidence type="ECO:0000305" key="4"/>
<organism>
    <name type="scientific">Saccharomyces cerevisiae (strain ATCC 204508 / S288c)</name>
    <name type="common">Baker's yeast</name>
    <dbReference type="NCBI Taxonomy" id="559292"/>
    <lineage>
        <taxon>Eukaryota</taxon>
        <taxon>Fungi</taxon>
        <taxon>Dikarya</taxon>
        <taxon>Ascomycota</taxon>
        <taxon>Saccharomycotina</taxon>
        <taxon>Saccharomycetes</taxon>
        <taxon>Saccharomycetales</taxon>
        <taxon>Saccharomycetaceae</taxon>
        <taxon>Saccharomyces</taxon>
    </lineage>
</organism>